<sequence length="374" mass="41736">MIETNPIRQRITDLNDRVLSLRGIFDYDAKKERLEEVSRELESPDVWNDAERAQALGRERSMLEKTVIGIADVLSGLADAGDLLELAESEQDEDTALAVIADLDNYQAHVEKLEFQRMFSGQMDSANAFVDIQAGAGGTEAQDWAEILLRMYLRWAESRGWKTELMEVSGGEVAGIKSATVRIEGEYAYGWLKTEIGVHRLVRKSPFDSDNRRHTSFTSVFVSPEVDDNIEIDINPADLRTDVYRSSGAGGQHVNKTESAVRITHIPTNTVVACQTGRSQHQNRDNAMKMLAAKLYELEVQKRNAEKDALEATKSDIGWGSQIRNYVLDQSRIKDLRTGIERSDTQKVLDGDLDEFVEASLKAGLAAGSKRLDA</sequence>
<feature type="chain" id="PRO_1000005022" description="Peptide chain release factor 2">
    <location>
        <begin position="1"/>
        <end position="374"/>
    </location>
</feature>
<feature type="modified residue" description="N5-methylglutamine" evidence="1">
    <location>
        <position position="252"/>
    </location>
</feature>
<organism>
    <name type="scientific">Xanthomonas euvesicatoria pv. vesicatoria (strain 85-10)</name>
    <name type="common">Xanthomonas campestris pv. vesicatoria</name>
    <dbReference type="NCBI Taxonomy" id="316273"/>
    <lineage>
        <taxon>Bacteria</taxon>
        <taxon>Pseudomonadati</taxon>
        <taxon>Pseudomonadota</taxon>
        <taxon>Gammaproteobacteria</taxon>
        <taxon>Lysobacterales</taxon>
        <taxon>Lysobacteraceae</taxon>
        <taxon>Xanthomonas</taxon>
    </lineage>
</organism>
<accession>Q3BUB7</accession>
<protein>
    <recommendedName>
        <fullName evidence="1">Peptide chain release factor 2</fullName>
        <shortName evidence="1">RF-2</shortName>
    </recommendedName>
</protein>
<keyword id="KW-0963">Cytoplasm</keyword>
<keyword id="KW-0488">Methylation</keyword>
<keyword id="KW-0648">Protein biosynthesis</keyword>
<comment type="function">
    <text evidence="1">Peptide chain release factor 2 directs the termination of translation in response to the peptide chain termination codons UGA and UAA.</text>
</comment>
<comment type="subcellular location">
    <subcellularLocation>
        <location evidence="1">Cytoplasm</location>
    </subcellularLocation>
</comment>
<comment type="PTM">
    <text evidence="1">Methylated by PrmC. Methylation increases the termination efficiency of RF2.</text>
</comment>
<comment type="similarity">
    <text evidence="1">Belongs to the prokaryotic/mitochondrial release factor family.</text>
</comment>
<dbReference type="EMBL" id="AM039952">
    <property type="protein sequence ID" value="CAJ23592.1"/>
    <property type="molecule type" value="Genomic_DNA"/>
</dbReference>
<dbReference type="RefSeq" id="WP_011347211.1">
    <property type="nucleotide sequence ID" value="NZ_CP017190.1"/>
</dbReference>
<dbReference type="SMR" id="Q3BUB7"/>
<dbReference type="STRING" id="456327.BJD11_12845"/>
<dbReference type="KEGG" id="xcv:XCV1915"/>
<dbReference type="eggNOG" id="COG1186">
    <property type="taxonomic scope" value="Bacteria"/>
</dbReference>
<dbReference type="HOGENOM" id="CLU_036856_6_0_6"/>
<dbReference type="Proteomes" id="UP000007069">
    <property type="component" value="Chromosome"/>
</dbReference>
<dbReference type="GO" id="GO:0005737">
    <property type="term" value="C:cytoplasm"/>
    <property type="evidence" value="ECO:0007669"/>
    <property type="project" value="UniProtKB-SubCell"/>
</dbReference>
<dbReference type="GO" id="GO:0016149">
    <property type="term" value="F:translation release factor activity, codon specific"/>
    <property type="evidence" value="ECO:0007669"/>
    <property type="project" value="UniProtKB-UniRule"/>
</dbReference>
<dbReference type="FunFam" id="3.30.160.20:FF:000010">
    <property type="entry name" value="Peptide chain release factor 2"/>
    <property type="match status" value="1"/>
</dbReference>
<dbReference type="Gene3D" id="3.30.160.20">
    <property type="match status" value="1"/>
</dbReference>
<dbReference type="Gene3D" id="3.30.70.1660">
    <property type="match status" value="1"/>
</dbReference>
<dbReference type="Gene3D" id="1.20.58.410">
    <property type="entry name" value="Release factor"/>
    <property type="match status" value="1"/>
</dbReference>
<dbReference type="HAMAP" id="MF_00094">
    <property type="entry name" value="Rel_fac_2"/>
    <property type="match status" value="1"/>
</dbReference>
<dbReference type="InterPro" id="IPR005139">
    <property type="entry name" value="PCRF"/>
</dbReference>
<dbReference type="InterPro" id="IPR000352">
    <property type="entry name" value="Pep_chain_release_fac_I"/>
</dbReference>
<dbReference type="InterPro" id="IPR045853">
    <property type="entry name" value="Pep_chain_release_fac_I_sf"/>
</dbReference>
<dbReference type="InterPro" id="IPR004374">
    <property type="entry name" value="PrfB"/>
</dbReference>
<dbReference type="NCBIfam" id="TIGR00020">
    <property type="entry name" value="prfB"/>
    <property type="match status" value="1"/>
</dbReference>
<dbReference type="PANTHER" id="PTHR43116:SF3">
    <property type="entry name" value="CLASS I PEPTIDE CHAIN RELEASE FACTOR"/>
    <property type="match status" value="1"/>
</dbReference>
<dbReference type="PANTHER" id="PTHR43116">
    <property type="entry name" value="PEPTIDE CHAIN RELEASE FACTOR 2"/>
    <property type="match status" value="1"/>
</dbReference>
<dbReference type="Pfam" id="PF03462">
    <property type="entry name" value="PCRF"/>
    <property type="match status" value="1"/>
</dbReference>
<dbReference type="Pfam" id="PF00472">
    <property type="entry name" value="RF-1"/>
    <property type="match status" value="1"/>
</dbReference>
<dbReference type="SMART" id="SM00937">
    <property type="entry name" value="PCRF"/>
    <property type="match status" value="1"/>
</dbReference>
<dbReference type="SUPFAM" id="SSF75620">
    <property type="entry name" value="Release factor"/>
    <property type="match status" value="1"/>
</dbReference>
<dbReference type="PROSITE" id="PS00745">
    <property type="entry name" value="RF_PROK_I"/>
    <property type="match status" value="1"/>
</dbReference>
<gene>
    <name evidence="1" type="primary">prfB</name>
    <name type="ordered locus">XCV1915</name>
</gene>
<reference key="1">
    <citation type="journal article" date="2005" name="J. Bacteriol.">
        <title>Insights into genome plasticity and pathogenicity of the plant pathogenic Bacterium Xanthomonas campestris pv. vesicatoria revealed by the complete genome sequence.</title>
        <authorList>
            <person name="Thieme F."/>
            <person name="Koebnik R."/>
            <person name="Bekel T."/>
            <person name="Berger C."/>
            <person name="Boch J."/>
            <person name="Buettner D."/>
            <person name="Caldana C."/>
            <person name="Gaigalat L."/>
            <person name="Goesmann A."/>
            <person name="Kay S."/>
            <person name="Kirchner O."/>
            <person name="Lanz C."/>
            <person name="Linke B."/>
            <person name="McHardy A.C."/>
            <person name="Meyer F."/>
            <person name="Mittenhuber G."/>
            <person name="Nies D.H."/>
            <person name="Niesbach-Kloesgen U."/>
            <person name="Patschkowski T."/>
            <person name="Rueckert C."/>
            <person name="Rupp O."/>
            <person name="Schneiker S."/>
            <person name="Schuster S.C."/>
            <person name="Vorhoelter F.J."/>
            <person name="Weber E."/>
            <person name="Puehler A."/>
            <person name="Bonas U."/>
            <person name="Bartels D."/>
            <person name="Kaiser O."/>
        </authorList>
    </citation>
    <scope>NUCLEOTIDE SEQUENCE [LARGE SCALE GENOMIC DNA]</scope>
    <source>
        <strain>85-10</strain>
    </source>
</reference>
<name>RF2_XANE5</name>
<proteinExistence type="inferred from homology"/>
<evidence type="ECO:0000255" key="1">
    <source>
        <dbReference type="HAMAP-Rule" id="MF_00094"/>
    </source>
</evidence>